<accession>A3CQ78</accession>
<evidence type="ECO:0000255" key="1">
    <source>
        <dbReference type="HAMAP-Rule" id="MF_01124"/>
    </source>
</evidence>
<organism>
    <name type="scientific">Streptococcus sanguinis (strain SK36)</name>
    <dbReference type="NCBI Taxonomy" id="388919"/>
    <lineage>
        <taxon>Bacteria</taxon>
        <taxon>Bacillati</taxon>
        <taxon>Bacillota</taxon>
        <taxon>Bacilli</taxon>
        <taxon>Lactobacillales</taxon>
        <taxon>Streptococcaceae</taxon>
        <taxon>Streptococcus</taxon>
    </lineage>
</organism>
<keyword id="KW-1185">Reference proteome</keyword>
<reference key="1">
    <citation type="journal article" date="2007" name="J. Bacteriol.">
        <title>Genome of the opportunistic pathogen Streptococcus sanguinis.</title>
        <authorList>
            <person name="Xu P."/>
            <person name="Alves J.M."/>
            <person name="Kitten T."/>
            <person name="Brown A."/>
            <person name="Chen Z."/>
            <person name="Ozaki L.S."/>
            <person name="Manque P."/>
            <person name="Ge X."/>
            <person name="Serrano M.G."/>
            <person name="Puiu D."/>
            <person name="Hendricks S."/>
            <person name="Wang Y."/>
            <person name="Chaplin M.D."/>
            <person name="Akan D."/>
            <person name="Paik S."/>
            <person name="Peterson D.L."/>
            <person name="Macrina F.L."/>
            <person name="Buck G.A."/>
        </authorList>
    </citation>
    <scope>NUCLEOTIDE SEQUENCE [LARGE SCALE GENOMIC DNA]</scope>
    <source>
        <strain>SK36</strain>
    </source>
</reference>
<protein>
    <recommendedName>
        <fullName evidence="1">Adapter protein MecA</fullName>
    </recommendedName>
</protein>
<feature type="chain" id="PRO_1000065352" description="Adapter protein MecA">
    <location>
        <begin position="1"/>
        <end position="250"/>
    </location>
</feature>
<gene>
    <name evidence="1" type="primary">mecA</name>
    <name type="ordered locus">SSA_1958</name>
</gene>
<comment type="function">
    <text evidence="1">Enables the recognition and targeting of unfolded and aggregated proteins to the ClpC protease or to other proteins involved in proteolysis.</text>
</comment>
<comment type="subunit">
    <text evidence="1">Homodimer.</text>
</comment>
<comment type="domain">
    <text>The N-terminal domain probably binds unfolded/aggregated proteins; the C-terminal domain interacts with ClpC.</text>
</comment>
<comment type="similarity">
    <text evidence="1">Belongs to the MecA family.</text>
</comment>
<name>MECA_STRSV</name>
<dbReference type="EMBL" id="CP000387">
    <property type="protein sequence ID" value="ABN45333.1"/>
    <property type="molecule type" value="Genomic_DNA"/>
</dbReference>
<dbReference type="RefSeq" id="WP_011837465.1">
    <property type="nucleotide sequence ID" value="NC_009009.1"/>
</dbReference>
<dbReference type="RefSeq" id="YP_001035883.1">
    <property type="nucleotide sequence ID" value="NC_009009.1"/>
</dbReference>
<dbReference type="SMR" id="A3CQ78"/>
<dbReference type="STRING" id="388919.SSA_1958"/>
<dbReference type="KEGG" id="ssa:SSA_1958"/>
<dbReference type="PATRIC" id="fig|388919.9.peg.1857"/>
<dbReference type="eggNOG" id="COG4862">
    <property type="taxonomic scope" value="Bacteria"/>
</dbReference>
<dbReference type="HOGENOM" id="CLU_071496_1_0_9"/>
<dbReference type="OrthoDB" id="2360201at2"/>
<dbReference type="Proteomes" id="UP000002148">
    <property type="component" value="Chromosome"/>
</dbReference>
<dbReference type="GO" id="GO:0030674">
    <property type="term" value="F:protein-macromolecule adaptor activity"/>
    <property type="evidence" value="ECO:0007669"/>
    <property type="project" value="UniProtKB-UniRule"/>
</dbReference>
<dbReference type="Gene3D" id="3.30.70.1950">
    <property type="match status" value="1"/>
</dbReference>
<dbReference type="HAMAP" id="MF_01124">
    <property type="entry name" value="MecA"/>
    <property type="match status" value="1"/>
</dbReference>
<dbReference type="InterPro" id="IPR038471">
    <property type="entry name" value="MecA_C_sf"/>
</dbReference>
<dbReference type="InterPro" id="IPR008681">
    <property type="entry name" value="Neg-reg_MecA"/>
</dbReference>
<dbReference type="NCBIfam" id="NF002643">
    <property type="entry name" value="PRK02315.1-4"/>
    <property type="match status" value="1"/>
</dbReference>
<dbReference type="PANTHER" id="PTHR39161">
    <property type="entry name" value="ADAPTER PROTEIN MECA"/>
    <property type="match status" value="1"/>
</dbReference>
<dbReference type="PANTHER" id="PTHR39161:SF1">
    <property type="entry name" value="ADAPTER PROTEIN MECA 1"/>
    <property type="match status" value="1"/>
</dbReference>
<dbReference type="Pfam" id="PF05389">
    <property type="entry name" value="MecA"/>
    <property type="match status" value="1"/>
</dbReference>
<dbReference type="PIRSF" id="PIRSF029008">
    <property type="entry name" value="MecA"/>
    <property type="match status" value="1"/>
</dbReference>
<proteinExistence type="inferred from homology"/>
<sequence>MEMKQISDSTIKITIQLEDLEKRGMEMADFLVPQEKTEEFFYTILDELEMPDNFLDSGMLSFRVTPKPDKVDVFVTKSKLDKNLSFEDLADLPDMDELSHMSPDEFLKTLEKSIFEKSKEDIEAVKSLETAEAEEREQLSQEAADEQSAENAERYIYYILRFEDIKAAAAFAQTVDYKIDLSELYKYDSAYYLTILVDVEGFPERYPAWLLAKMREFADDSDITRAVLQEHGHLLLVTDAVSGLQKVECL</sequence>